<protein>
    <recommendedName>
        <fullName evidence="1">Ribosomal protein L11 methyltransferase</fullName>
        <shortName evidence="1">L11 Mtase</shortName>
        <ecNumber evidence="1">2.1.1.-</ecNumber>
    </recommendedName>
</protein>
<comment type="function">
    <text evidence="1">Methylates ribosomal protein L11.</text>
</comment>
<comment type="catalytic activity">
    <reaction evidence="1">
        <text>L-lysyl-[protein] + 3 S-adenosyl-L-methionine = N(6),N(6),N(6)-trimethyl-L-lysyl-[protein] + 3 S-adenosyl-L-homocysteine + 3 H(+)</text>
        <dbReference type="Rhea" id="RHEA:54192"/>
        <dbReference type="Rhea" id="RHEA-COMP:9752"/>
        <dbReference type="Rhea" id="RHEA-COMP:13826"/>
        <dbReference type="ChEBI" id="CHEBI:15378"/>
        <dbReference type="ChEBI" id="CHEBI:29969"/>
        <dbReference type="ChEBI" id="CHEBI:57856"/>
        <dbReference type="ChEBI" id="CHEBI:59789"/>
        <dbReference type="ChEBI" id="CHEBI:61961"/>
    </reaction>
</comment>
<comment type="subcellular location">
    <subcellularLocation>
        <location evidence="1">Cytoplasm</location>
    </subcellularLocation>
</comment>
<comment type="similarity">
    <text evidence="1">Belongs to the methyltransferase superfamily. PrmA family.</text>
</comment>
<organism>
    <name type="scientific">Desulfitobacterium hafniense (strain DSM 10664 / DCB-2)</name>
    <dbReference type="NCBI Taxonomy" id="272564"/>
    <lineage>
        <taxon>Bacteria</taxon>
        <taxon>Bacillati</taxon>
        <taxon>Bacillota</taxon>
        <taxon>Clostridia</taxon>
        <taxon>Eubacteriales</taxon>
        <taxon>Desulfitobacteriaceae</taxon>
        <taxon>Desulfitobacterium</taxon>
    </lineage>
</organism>
<dbReference type="EC" id="2.1.1.-" evidence="1"/>
<dbReference type="EMBL" id="CP001336">
    <property type="protein sequence ID" value="ACL22302.1"/>
    <property type="molecule type" value="Genomic_DNA"/>
</dbReference>
<dbReference type="RefSeq" id="WP_015945154.1">
    <property type="nucleotide sequence ID" value="NC_011830.1"/>
</dbReference>
<dbReference type="SMR" id="B8FUN2"/>
<dbReference type="KEGG" id="dhd:Dhaf_4297"/>
<dbReference type="HOGENOM" id="CLU_049382_0_1_9"/>
<dbReference type="Proteomes" id="UP000007726">
    <property type="component" value="Chromosome"/>
</dbReference>
<dbReference type="GO" id="GO:0005737">
    <property type="term" value="C:cytoplasm"/>
    <property type="evidence" value="ECO:0007669"/>
    <property type="project" value="UniProtKB-SubCell"/>
</dbReference>
<dbReference type="GO" id="GO:0016279">
    <property type="term" value="F:protein-lysine N-methyltransferase activity"/>
    <property type="evidence" value="ECO:0007669"/>
    <property type="project" value="RHEA"/>
</dbReference>
<dbReference type="GO" id="GO:0032259">
    <property type="term" value="P:methylation"/>
    <property type="evidence" value="ECO:0007669"/>
    <property type="project" value="UniProtKB-KW"/>
</dbReference>
<dbReference type="CDD" id="cd02440">
    <property type="entry name" value="AdoMet_MTases"/>
    <property type="match status" value="1"/>
</dbReference>
<dbReference type="Gene3D" id="3.40.50.150">
    <property type="entry name" value="Vaccinia Virus protein VP39"/>
    <property type="match status" value="1"/>
</dbReference>
<dbReference type="HAMAP" id="MF_00735">
    <property type="entry name" value="Methyltr_PrmA"/>
    <property type="match status" value="1"/>
</dbReference>
<dbReference type="InterPro" id="IPR050078">
    <property type="entry name" value="Ribosomal_L11_MeTrfase_PrmA"/>
</dbReference>
<dbReference type="InterPro" id="IPR004498">
    <property type="entry name" value="Ribosomal_PrmA_MeTrfase"/>
</dbReference>
<dbReference type="InterPro" id="IPR029063">
    <property type="entry name" value="SAM-dependent_MTases_sf"/>
</dbReference>
<dbReference type="NCBIfam" id="TIGR00406">
    <property type="entry name" value="prmA"/>
    <property type="match status" value="1"/>
</dbReference>
<dbReference type="PANTHER" id="PTHR43648">
    <property type="entry name" value="ELECTRON TRANSFER FLAVOPROTEIN BETA SUBUNIT LYSINE METHYLTRANSFERASE"/>
    <property type="match status" value="1"/>
</dbReference>
<dbReference type="PANTHER" id="PTHR43648:SF1">
    <property type="entry name" value="ELECTRON TRANSFER FLAVOPROTEIN BETA SUBUNIT LYSINE METHYLTRANSFERASE"/>
    <property type="match status" value="1"/>
</dbReference>
<dbReference type="Pfam" id="PF06325">
    <property type="entry name" value="PrmA"/>
    <property type="match status" value="1"/>
</dbReference>
<dbReference type="PIRSF" id="PIRSF000401">
    <property type="entry name" value="RPL11_MTase"/>
    <property type="match status" value="1"/>
</dbReference>
<dbReference type="SUPFAM" id="SSF53335">
    <property type="entry name" value="S-adenosyl-L-methionine-dependent methyltransferases"/>
    <property type="match status" value="1"/>
</dbReference>
<proteinExistence type="inferred from homology"/>
<evidence type="ECO:0000255" key="1">
    <source>
        <dbReference type="HAMAP-Rule" id="MF_00735"/>
    </source>
</evidence>
<keyword id="KW-0963">Cytoplasm</keyword>
<keyword id="KW-0489">Methyltransferase</keyword>
<keyword id="KW-0949">S-adenosyl-L-methionine</keyword>
<keyword id="KW-0808">Transferase</keyword>
<accession>B8FUN2</accession>
<name>PRMA_DESHD</name>
<reference key="1">
    <citation type="journal article" date="2012" name="BMC Microbiol.">
        <title>Genome sequence of Desulfitobacterium hafniense DCB-2, a Gram-positive anaerobe capable of dehalogenation and metal reduction.</title>
        <authorList>
            <person name="Kim S.H."/>
            <person name="Harzman C."/>
            <person name="Davis J.K."/>
            <person name="Hutcheson R."/>
            <person name="Broderick J.B."/>
            <person name="Marsh T.L."/>
            <person name="Tiedje J.M."/>
        </authorList>
    </citation>
    <scope>NUCLEOTIDE SEQUENCE [LARGE SCALE GENOMIC DNA]</scope>
    <source>
        <strain>DSM 10664 / DCB-2</strain>
    </source>
</reference>
<sequence>MNWREIAVTVSSVGEEAVADLFYQLGCPGVSVEDPELLQSYVESGNWDYHDFGEIALTGTSVVKGYICEDHELQPKLRQLDEGLKELLQRFPEWVLQVKGLTVQEEDWATSWKAYFKPVRIGRHFLIKPSWEEVTPLPEDIILELDPGMAFGTGTHATTSLCLETLEETVKPDMRIFDLGTGSGILAIAAAKLGAQVEAIDLDSVAVKVAQENVELNQVADRISVRQGDLGTVLQGQADLVVANIIADVILMLIPDLKRIMKEDGEFLASGIIGHRSSDVEAGLGEHGLEVLEKKEDSGWVLLRARWQRASL</sequence>
<feature type="chain" id="PRO_1000192616" description="Ribosomal protein L11 methyltransferase">
    <location>
        <begin position="1"/>
        <end position="312"/>
    </location>
</feature>
<feature type="binding site" evidence="1">
    <location>
        <position position="159"/>
    </location>
    <ligand>
        <name>S-adenosyl-L-methionine</name>
        <dbReference type="ChEBI" id="CHEBI:59789"/>
    </ligand>
</feature>
<feature type="binding site" evidence="1">
    <location>
        <position position="180"/>
    </location>
    <ligand>
        <name>S-adenosyl-L-methionine</name>
        <dbReference type="ChEBI" id="CHEBI:59789"/>
    </ligand>
</feature>
<feature type="binding site" evidence="1">
    <location>
        <position position="201"/>
    </location>
    <ligand>
        <name>S-adenosyl-L-methionine</name>
        <dbReference type="ChEBI" id="CHEBI:59789"/>
    </ligand>
</feature>
<feature type="binding site" evidence="1">
    <location>
        <position position="244"/>
    </location>
    <ligand>
        <name>S-adenosyl-L-methionine</name>
        <dbReference type="ChEBI" id="CHEBI:59789"/>
    </ligand>
</feature>
<gene>
    <name evidence="1" type="primary">prmA</name>
    <name type="ordered locus">Dhaf_4297</name>
</gene>